<name>KAD_RUTMC</name>
<organism>
    <name type="scientific">Ruthia magnifica subsp. Calyptogena magnifica</name>
    <dbReference type="NCBI Taxonomy" id="413404"/>
    <lineage>
        <taxon>Bacteria</taxon>
        <taxon>Pseudomonadati</taxon>
        <taxon>Pseudomonadota</taxon>
        <taxon>Gammaproteobacteria</taxon>
        <taxon>Candidatus Pseudothioglobaceae</taxon>
        <taxon>Candidatus Ruthturnera</taxon>
    </lineage>
</organism>
<feature type="chain" id="PRO_1000058889" description="Adenylate kinase">
    <location>
        <begin position="1"/>
        <end position="216"/>
    </location>
</feature>
<feature type="region of interest" description="NMP" evidence="1">
    <location>
        <begin position="30"/>
        <end position="59"/>
    </location>
</feature>
<feature type="region of interest" description="LID" evidence="1">
    <location>
        <begin position="122"/>
        <end position="159"/>
    </location>
</feature>
<feature type="binding site" evidence="1">
    <location>
        <begin position="10"/>
        <end position="15"/>
    </location>
    <ligand>
        <name>ATP</name>
        <dbReference type="ChEBI" id="CHEBI:30616"/>
    </ligand>
</feature>
<feature type="binding site" evidence="1">
    <location>
        <position position="31"/>
    </location>
    <ligand>
        <name>AMP</name>
        <dbReference type="ChEBI" id="CHEBI:456215"/>
    </ligand>
</feature>
<feature type="binding site" evidence="1">
    <location>
        <position position="36"/>
    </location>
    <ligand>
        <name>AMP</name>
        <dbReference type="ChEBI" id="CHEBI:456215"/>
    </ligand>
</feature>
<feature type="binding site" evidence="1">
    <location>
        <begin position="57"/>
        <end position="59"/>
    </location>
    <ligand>
        <name>AMP</name>
        <dbReference type="ChEBI" id="CHEBI:456215"/>
    </ligand>
</feature>
<feature type="binding site" evidence="1">
    <location>
        <begin position="85"/>
        <end position="88"/>
    </location>
    <ligand>
        <name>AMP</name>
        <dbReference type="ChEBI" id="CHEBI:456215"/>
    </ligand>
</feature>
<feature type="binding site" evidence="1">
    <location>
        <position position="92"/>
    </location>
    <ligand>
        <name>AMP</name>
        <dbReference type="ChEBI" id="CHEBI:456215"/>
    </ligand>
</feature>
<feature type="binding site" evidence="1">
    <location>
        <position position="123"/>
    </location>
    <ligand>
        <name>ATP</name>
        <dbReference type="ChEBI" id="CHEBI:30616"/>
    </ligand>
</feature>
<feature type="binding site" evidence="1">
    <location>
        <begin position="132"/>
        <end position="133"/>
    </location>
    <ligand>
        <name>ATP</name>
        <dbReference type="ChEBI" id="CHEBI:30616"/>
    </ligand>
</feature>
<feature type="binding site" evidence="1">
    <location>
        <position position="156"/>
    </location>
    <ligand>
        <name>AMP</name>
        <dbReference type="ChEBI" id="CHEBI:456215"/>
    </ligand>
</feature>
<feature type="binding site" evidence="1">
    <location>
        <position position="167"/>
    </location>
    <ligand>
        <name>AMP</name>
        <dbReference type="ChEBI" id="CHEBI:456215"/>
    </ligand>
</feature>
<feature type="binding site" evidence="1">
    <location>
        <position position="202"/>
    </location>
    <ligand>
        <name>ATP</name>
        <dbReference type="ChEBI" id="CHEBI:30616"/>
    </ligand>
</feature>
<evidence type="ECO:0000255" key="1">
    <source>
        <dbReference type="HAMAP-Rule" id="MF_00235"/>
    </source>
</evidence>
<sequence length="216" mass="23967">MNIILLGPPGAGKGTQATNICQKYSIPQISTGDMLREAVKADTPLGIEAKKVMDVGGLISDDIIIGLVKERIQENDCKNGFLFDGFPRTIVQAEALKTDGVKIDFVVEIQVPYEDIIARMSGRRAHLTSGRTYHIVYNPPKVEGIDDITGEELIQRTDDAEDTVRARLNIYHKQTKPLVDYYQSWMNKNSDAPKYGAVVGVGTLDEVRDRVYAQLN</sequence>
<protein>
    <recommendedName>
        <fullName evidence="1">Adenylate kinase</fullName>
        <shortName evidence="1">AK</shortName>
        <ecNumber evidence="1">2.7.4.3</ecNumber>
    </recommendedName>
    <alternativeName>
        <fullName evidence="1">ATP-AMP transphosphorylase</fullName>
    </alternativeName>
    <alternativeName>
        <fullName evidence="1">ATP:AMP phosphotransferase</fullName>
    </alternativeName>
    <alternativeName>
        <fullName evidence="1">Adenylate monophosphate kinase</fullName>
    </alternativeName>
</protein>
<gene>
    <name evidence="1" type="primary">adk</name>
    <name type="ordered locus">Rmag_0093</name>
</gene>
<dbReference type="EC" id="2.7.4.3" evidence="1"/>
<dbReference type="EMBL" id="CP000488">
    <property type="protein sequence ID" value="ABL01892.1"/>
    <property type="molecule type" value="Genomic_DNA"/>
</dbReference>
<dbReference type="RefSeq" id="WP_011737518.1">
    <property type="nucleotide sequence ID" value="NC_008610.1"/>
</dbReference>
<dbReference type="SMR" id="A1AVD5"/>
<dbReference type="STRING" id="413404.Rmag_0093"/>
<dbReference type="KEGG" id="rma:Rmag_0093"/>
<dbReference type="eggNOG" id="COG0563">
    <property type="taxonomic scope" value="Bacteria"/>
</dbReference>
<dbReference type="HOGENOM" id="CLU_032354_1_2_6"/>
<dbReference type="OrthoDB" id="9805030at2"/>
<dbReference type="UniPathway" id="UPA00588">
    <property type="reaction ID" value="UER00649"/>
</dbReference>
<dbReference type="Proteomes" id="UP000002587">
    <property type="component" value="Chromosome"/>
</dbReference>
<dbReference type="GO" id="GO:0005737">
    <property type="term" value="C:cytoplasm"/>
    <property type="evidence" value="ECO:0007669"/>
    <property type="project" value="UniProtKB-SubCell"/>
</dbReference>
<dbReference type="GO" id="GO:0004017">
    <property type="term" value="F:adenylate kinase activity"/>
    <property type="evidence" value="ECO:0007669"/>
    <property type="project" value="UniProtKB-UniRule"/>
</dbReference>
<dbReference type="GO" id="GO:0005524">
    <property type="term" value="F:ATP binding"/>
    <property type="evidence" value="ECO:0007669"/>
    <property type="project" value="UniProtKB-UniRule"/>
</dbReference>
<dbReference type="GO" id="GO:0044209">
    <property type="term" value="P:AMP salvage"/>
    <property type="evidence" value="ECO:0007669"/>
    <property type="project" value="UniProtKB-UniRule"/>
</dbReference>
<dbReference type="CDD" id="cd01428">
    <property type="entry name" value="ADK"/>
    <property type="match status" value="1"/>
</dbReference>
<dbReference type="FunFam" id="3.40.50.300:FF:000106">
    <property type="entry name" value="Adenylate kinase mitochondrial"/>
    <property type="match status" value="1"/>
</dbReference>
<dbReference type="Gene3D" id="3.40.50.300">
    <property type="entry name" value="P-loop containing nucleotide triphosphate hydrolases"/>
    <property type="match status" value="1"/>
</dbReference>
<dbReference type="HAMAP" id="MF_00235">
    <property type="entry name" value="Adenylate_kinase_Adk"/>
    <property type="match status" value="1"/>
</dbReference>
<dbReference type="InterPro" id="IPR006259">
    <property type="entry name" value="Adenyl_kin_sub"/>
</dbReference>
<dbReference type="InterPro" id="IPR000850">
    <property type="entry name" value="Adenylat/UMP-CMP_kin"/>
</dbReference>
<dbReference type="InterPro" id="IPR033690">
    <property type="entry name" value="Adenylat_kinase_CS"/>
</dbReference>
<dbReference type="InterPro" id="IPR007862">
    <property type="entry name" value="Adenylate_kinase_lid-dom"/>
</dbReference>
<dbReference type="InterPro" id="IPR027417">
    <property type="entry name" value="P-loop_NTPase"/>
</dbReference>
<dbReference type="NCBIfam" id="TIGR01351">
    <property type="entry name" value="adk"/>
    <property type="match status" value="1"/>
</dbReference>
<dbReference type="NCBIfam" id="NF001379">
    <property type="entry name" value="PRK00279.1-1"/>
    <property type="match status" value="1"/>
</dbReference>
<dbReference type="NCBIfam" id="NF001380">
    <property type="entry name" value="PRK00279.1-2"/>
    <property type="match status" value="1"/>
</dbReference>
<dbReference type="NCBIfam" id="NF001381">
    <property type="entry name" value="PRK00279.1-3"/>
    <property type="match status" value="1"/>
</dbReference>
<dbReference type="NCBIfam" id="NF011100">
    <property type="entry name" value="PRK14527.1"/>
    <property type="match status" value="1"/>
</dbReference>
<dbReference type="PANTHER" id="PTHR23359">
    <property type="entry name" value="NUCLEOTIDE KINASE"/>
    <property type="match status" value="1"/>
</dbReference>
<dbReference type="Pfam" id="PF00406">
    <property type="entry name" value="ADK"/>
    <property type="match status" value="1"/>
</dbReference>
<dbReference type="Pfam" id="PF05191">
    <property type="entry name" value="ADK_lid"/>
    <property type="match status" value="1"/>
</dbReference>
<dbReference type="PRINTS" id="PR00094">
    <property type="entry name" value="ADENYLTKNASE"/>
</dbReference>
<dbReference type="SUPFAM" id="SSF52540">
    <property type="entry name" value="P-loop containing nucleoside triphosphate hydrolases"/>
    <property type="match status" value="1"/>
</dbReference>
<dbReference type="PROSITE" id="PS00113">
    <property type="entry name" value="ADENYLATE_KINASE"/>
    <property type="match status" value="1"/>
</dbReference>
<accession>A1AVD5</accession>
<comment type="function">
    <text evidence="1">Catalyzes the reversible transfer of the terminal phosphate group between ATP and AMP. Plays an important role in cellular energy homeostasis and in adenine nucleotide metabolism.</text>
</comment>
<comment type="catalytic activity">
    <reaction evidence="1">
        <text>AMP + ATP = 2 ADP</text>
        <dbReference type="Rhea" id="RHEA:12973"/>
        <dbReference type="ChEBI" id="CHEBI:30616"/>
        <dbReference type="ChEBI" id="CHEBI:456215"/>
        <dbReference type="ChEBI" id="CHEBI:456216"/>
        <dbReference type="EC" id="2.7.4.3"/>
    </reaction>
</comment>
<comment type="pathway">
    <text evidence="1">Purine metabolism; AMP biosynthesis via salvage pathway; AMP from ADP: step 1/1.</text>
</comment>
<comment type="subunit">
    <text evidence="1">Monomer.</text>
</comment>
<comment type="subcellular location">
    <subcellularLocation>
        <location evidence="1">Cytoplasm</location>
    </subcellularLocation>
</comment>
<comment type="domain">
    <text evidence="1">Consists of three domains, a large central CORE domain and two small peripheral domains, NMPbind and LID, which undergo movements during catalysis. The LID domain closes over the site of phosphoryl transfer upon ATP binding. Assembling and dissambling the active center during each catalytic cycle provides an effective means to prevent ATP hydrolysis.</text>
</comment>
<comment type="similarity">
    <text evidence="1">Belongs to the adenylate kinase family.</text>
</comment>
<keyword id="KW-0067">ATP-binding</keyword>
<keyword id="KW-0963">Cytoplasm</keyword>
<keyword id="KW-0418">Kinase</keyword>
<keyword id="KW-0545">Nucleotide biosynthesis</keyword>
<keyword id="KW-0547">Nucleotide-binding</keyword>
<keyword id="KW-0808">Transferase</keyword>
<reference key="1">
    <citation type="journal article" date="2007" name="Science">
        <title>The Calyptogena magnifica chemoautotrophic symbiont genome.</title>
        <authorList>
            <person name="Newton I.L.G."/>
            <person name="Woyke T."/>
            <person name="Auchtung T.A."/>
            <person name="Dilly G.F."/>
            <person name="Dutton R.J."/>
            <person name="Fisher M.C."/>
            <person name="Fontanez K.M."/>
            <person name="Lau E."/>
            <person name="Stewart F.J."/>
            <person name="Richardson P.M."/>
            <person name="Barry K.W."/>
            <person name="Saunders E."/>
            <person name="Detter J.C."/>
            <person name="Wu D."/>
            <person name="Eisen J.A."/>
            <person name="Cavanaugh C.M."/>
        </authorList>
    </citation>
    <scope>NUCLEOTIDE SEQUENCE [LARGE SCALE GENOMIC DNA]</scope>
</reference>
<proteinExistence type="inferred from homology"/>